<evidence type="ECO:0000255" key="1">
    <source>
        <dbReference type="HAMAP-Rule" id="MF_01080"/>
    </source>
</evidence>
<keyword id="KW-0413">Isomerase</keyword>
<keyword id="KW-0819">tRNA processing</keyword>
<organism>
    <name type="scientific">Yersinia pestis (strain Pestoides F)</name>
    <dbReference type="NCBI Taxonomy" id="386656"/>
    <lineage>
        <taxon>Bacteria</taxon>
        <taxon>Pseudomonadati</taxon>
        <taxon>Pseudomonadota</taxon>
        <taxon>Gammaproteobacteria</taxon>
        <taxon>Enterobacterales</taxon>
        <taxon>Yersiniaceae</taxon>
        <taxon>Yersinia</taxon>
    </lineage>
</organism>
<name>TRUB_YERPP</name>
<reference key="1">
    <citation type="submission" date="2007-02" db="EMBL/GenBank/DDBJ databases">
        <title>Complete sequence of chromosome of Yersinia pestis Pestoides F.</title>
        <authorList>
            <consortium name="US DOE Joint Genome Institute"/>
            <person name="Copeland A."/>
            <person name="Lucas S."/>
            <person name="Lapidus A."/>
            <person name="Barry K."/>
            <person name="Detter J.C."/>
            <person name="Glavina del Rio T."/>
            <person name="Hammon N."/>
            <person name="Israni S."/>
            <person name="Dalin E."/>
            <person name="Tice H."/>
            <person name="Pitluck S."/>
            <person name="Di Bartolo G."/>
            <person name="Chain P."/>
            <person name="Malfatti S."/>
            <person name="Shin M."/>
            <person name="Vergez L."/>
            <person name="Schmutz J."/>
            <person name="Larimer F."/>
            <person name="Land M."/>
            <person name="Hauser L."/>
            <person name="Worsham P."/>
            <person name="Chu M."/>
            <person name="Bearden S."/>
            <person name="Garcia E."/>
            <person name="Richardson P."/>
        </authorList>
    </citation>
    <scope>NUCLEOTIDE SEQUENCE [LARGE SCALE GENOMIC DNA]</scope>
    <source>
        <strain>Pestoides F</strain>
    </source>
</reference>
<sequence>MGRPRRRGRDINGVLLLDKPLGLSSNDVLQKVKRLFSANRAGHTGALDPLATGMLPICLGEATKFSQFLLDSDKRYRVVARLGQRTDTSDAEGALISEREVNLTQAQIDTALESFRGESQQIPSMYSALKHQGKPLYEYARQGIEVEREARSITVYELLFIRWEGNDLELEIHCSKGTYIRTIIDDLGELLGCGAHVSYLRRLQVATYPSERMVTLEQLTAMVEAAQAEGRSPNPELDSLLLPMDSAVLNFPEVNLLPSVAAYVKQGQPVHVSGAPSEGMVRITEGKERNFIGIGTIAEDGRVAPKRLVVESVEVENLPVENKK</sequence>
<protein>
    <recommendedName>
        <fullName evidence="1">tRNA pseudouridine synthase B</fullName>
        <ecNumber evidence="1">5.4.99.25</ecNumber>
    </recommendedName>
    <alternativeName>
        <fullName evidence="1">tRNA pseudouridine(55) synthase</fullName>
        <shortName evidence="1">Psi55 synthase</shortName>
    </alternativeName>
    <alternativeName>
        <fullName evidence="1">tRNA pseudouridylate synthase</fullName>
    </alternativeName>
    <alternativeName>
        <fullName evidence="1">tRNA-uridine isomerase</fullName>
    </alternativeName>
</protein>
<gene>
    <name evidence="1" type="primary">truB</name>
    <name type="ordered locus">YPDSF_3543</name>
</gene>
<proteinExistence type="inferred from homology"/>
<feature type="chain" id="PRO_1000084719" description="tRNA pseudouridine synthase B">
    <location>
        <begin position="1"/>
        <end position="324"/>
    </location>
</feature>
<feature type="active site" description="Nucleophile" evidence="1">
    <location>
        <position position="48"/>
    </location>
</feature>
<feature type="binding site" evidence="1">
    <location>
        <position position="43"/>
    </location>
    <ligand>
        <name>substrate</name>
    </ligand>
</feature>
<feature type="binding site" evidence="1">
    <location>
        <position position="76"/>
    </location>
    <ligand>
        <name>substrate</name>
    </ligand>
</feature>
<feature type="binding site" evidence="1">
    <location>
        <position position="179"/>
    </location>
    <ligand>
        <name>substrate</name>
    </ligand>
</feature>
<feature type="binding site" evidence="1">
    <location>
        <position position="200"/>
    </location>
    <ligand>
        <name>substrate</name>
    </ligand>
</feature>
<accession>A4TRI1</accession>
<comment type="function">
    <text evidence="1">Responsible for synthesis of pseudouridine from uracil-55 in the psi GC loop of transfer RNAs.</text>
</comment>
<comment type="catalytic activity">
    <reaction evidence="1">
        <text>uridine(55) in tRNA = pseudouridine(55) in tRNA</text>
        <dbReference type="Rhea" id="RHEA:42532"/>
        <dbReference type="Rhea" id="RHEA-COMP:10101"/>
        <dbReference type="Rhea" id="RHEA-COMP:10102"/>
        <dbReference type="ChEBI" id="CHEBI:65314"/>
        <dbReference type="ChEBI" id="CHEBI:65315"/>
        <dbReference type="EC" id="5.4.99.25"/>
    </reaction>
</comment>
<comment type="similarity">
    <text evidence="1">Belongs to the pseudouridine synthase TruB family. Type 1 subfamily.</text>
</comment>
<dbReference type="EC" id="5.4.99.25" evidence="1"/>
<dbReference type="EMBL" id="CP000668">
    <property type="protein sequence ID" value="ABP41893.1"/>
    <property type="molecule type" value="Genomic_DNA"/>
</dbReference>
<dbReference type="RefSeq" id="WP_002209256.1">
    <property type="nucleotide sequence ID" value="NZ_CP009715.1"/>
</dbReference>
<dbReference type="SMR" id="A4TRI1"/>
<dbReference type="GeneID" id="57975222"/>
<dbReference type="KEGG" id="ypp:YPDSF_3543"/>
<dbReference type="PATRIC" id="fig|386656.14.peg.199"/>
<dbReference type="GO" id="GO:0003723">
    <property type="term" value="F:RNA binding"/>
    <property type="evidence" value="ECO:0007669"/>
    <property type="project" value="InterPro"/>
</dbReference>
<dbReference type="GO" id="GO:0160148">
    <property type="term" value="F:tRNA pseudouridine(55) synthase activity"/>
    <property type="evidence" value="ECO:0007669"/>
    <property type="project" value="UniProtKB-EC"/>
</dbReference>
<dbReference type="GO" id="GO:1990481">
    <property type="term" value="P:mRNA pseudouridine synthesis"/>
    <property type="evidence" value="ECO:0007669"/>
    <property type="project" value="TreeGrafter"/>
</dbReference>
<dbReference type="GO" id="GO:0031119">
    <property type="term" value="P:tRNA pseudouridine synthesis"/>
    <property type="evidence" value="ECO:0007669"/>
    <property type="project" value="UniProtKB-UniRule"/>
</dbReference>
<dbReference type="CDD" id="cd02573">
    <property type="entry name" value="PseudoU_synth_EcTruB"/>
    <property type="match status" value="1"/>
</dbReference>
<dbReference type="CDD" id="cd21152">
    <property type="entry name" value="PUA_TruB_bacterial"/>
    <property type="match status" value="1"/>
</dbReference>
<dbReference type="FunFam" id="2.30.130.10:FF:000004">
    <property type="entry name" value="tRNA pseudouridine synthase B"/>
    <property type="match status" value="1"/>
</dbReference>
<dbReference type="FunFam" id="3.30.2350.10:FF:000003">
    <property type="entry name" value="tRNA pseudouridine synthase B"/>
    <property type="match status" value="1"/>
</dbReference>
<dbReference type="Gene3D" id="3.30.2350.10">
    <property type="entry name" value="Pseudouridine synthase"/>
    <property type="match status" value="1"/>
</dbReference>
<dbReference type="Gene3D" id="2.30.130.10">
    <property type="entry name" value="PUA domain"/>
    <property type="match status" value="1"/>
</dbReference>
<dbReference type="HAMAP" id="MF_01080">
    <property type="entry name" value="TruB_bact"/>
    <property type="match status" value="1"/>
</dbReference>
<dbReference type="InterPro" id="IPR020103">
    <property type="entry name" value="PsdUridine_synth_cat_dom_sf"/>
</dbReference>
<dbReference type="InterPro" id="IPR002501">
    <property type="entry name" value="PsdUridine_synth_N"/>
</dbReference>
<dbReference type="InterPro" id="IPR015947">
    <property type="entry name" value="PUA-like_sf"/>
</dbReference>
<dbReference type="InterPro" id="IPR036974">
    <property type="entry name" value="PUA_sf"/>
</dbReference>
<dbReference type="InterPro" id="IPR014780">
    <property type="entry name" value="tRNA_psdUridine_synth_TruB"/>
</dbReference>
<dbReference type="InterPro" id="IPR015240">
    <property type="entry name" value="tRNA_sdUridine_synth_fam1_C"/>
</dbReference>
<dbReference type="InterPro" id="IPR032819">
    <property type="entry name" value="TruB_C"/>
</dbReference>
<dbReference type="NCBIfam" id="TIGR00431">
    <property type="entry name" value="TruB"/>
    <property type="match status" value="1"/>
</dbReference>
<dbReference type="PANTHER" id="PTHR13767:SF2">
    <property type="entry name" value="PSEUDOURIDYLATE SYNTHASE TRUB1"/>
    <property type="match status" value="1"/>
</dbReference>
<dbReference type="PANTHER" id="PTHR13767">
    <property type="entry name" value="TRNA-PSEUDOURIDINE SYNTHASE"/>
    <property type="match status" value="1"/>
</dbReference>
<dbReference type="Pfam" id="PF09157">
    <property type="entry name" value="TruB-C_2"/>
    <property type="match status" value="1"/>
</dbReference>
<dbReference type="Pfam" id="PF16198">
    <property type="entry name" value="TruB_C_2"/>
    <property type="match status" value="1"/>
</dbReference>
<dbReference type="Pfam" id="PF01509">
    <property type="entry name" value="TruB_N"/>
    <property type="match status" value="1"/>
</dbReference>
<dbReference type="SUPFAM" id="SSF55120">
    <property type="entry name" value="Pseudouridine synthase"/>
    <property type="match status" value="1"/>
</dbReference>
<dbReference type="SUPFAM" id="SSF88697">
    <property type="entry name" value="PUA domain-like"/>
    <property type="match status" value="1"/>
</dbReference>